<name>MATK_SYZAU</name>
<feature type="chain" id="PRO_0000143727" description="Maturase K">
    <location>
        <begin position="1"/>
        <end position="503"/>
    </location>
</feature>
<comment type="function">
    <text evidence="1">Usually encoded in the trnK tRNA gene intron. Probably assists in splicing its own and other chloroplast group II introns.</text>
</comment>
<comment type="subcellular location">
    <subcellularLocation>
        <location>Plastid</location>
        <location>Chloroplast</location>
    </subcellularLocation>
</comment>
<comment type="similarity">
    <text evidence="1">Belongs to the intron maturase 2 family. MatK subfamily.</text>
</comment>
<protein>
    <recommendedName>
        <fullName evidence="1">Maturase K</fullName>
    </recommendedName>
    <alternativeName>
        <fullName evidence="1">Intron maturase</fullName>
    </alternativeName>
</protein>
<geneLocation type="chloroplast"/>
<gene>
    <name evidence="1" type="primary">matK</name>
</gene>
<keyword id="KW-0150">Chloroplast</keyword>
<keyword id="KW-0507">mRNA processing</keyword>
<keyword id="KW-0934">Plastid</keyword>
<keyword id="KW-0694">RNA-binding</keyword>
<keyword id="KW-0819">tRNA processing</keyword>
<organism>
    <name type="scientific">Syzygium australe</name>
    <name type="common">Brush cherry</name>
    <name type="synonym">Eugenia australis</name>
    <dbReference type="NCBI Taxonomy" id="178175"/>
    <lineage>
        <taxon>Eukaryota</taxon>
        <taxon>Viridiplantae</taxon>
        <taxon>Streptophyta</taxon>
        <taxon>Embryophyta</taxon>
        <taxon>Tracheophyta</taxon>
        <taxon>Spermatophyta</taxon>
        <taxon>Magnoliopsida</taxon>
        <taxon>eudicotyledons</taxon>
        <taxon>Gunneridae</taxon>
        <taxon>Pentapetalae</taxon>
        <taxon>rosids</taxon>
        <taxon>malvids</taxon>
        <taxon>Myrtales</taxon>
        <taxon>Myrtaceae</taxon>
        <taxon>Myrtoideae</taxon>
        <taxon>Syzygieae</taxon>
        <taxon>Syzygium</taxon>
    </lineage>
</organism>
<evidence type="ECO:0000255" key="1">
    <source>
        <dbReference type="HAMAP-Rule" id="MF_01390"/>
    </source>
</evidence>
<dbReference type="EMBL" id="AF368221">
    <property type="protein sequence ID" value="AAL37589.1"/>
    <property type="molecule type" value="Genomic_DNA"/>
</dbReference>
<dbReference type="GO" id="GO:0009507">
    <property type="term" value="C:chloroplast"/>
    <property type="evidence" value="ECO:0007669"/>
    <property type="project" value="UniProtKB-SubCell"/>
</dbReference>
<dbReference type="GO" id="GO:0003723">
    <property type="term" value="F:RNA binding"/>
    <property type="evidence" value="ECO:0007669"/>
    <property type="project" value="UniProtKB-KW"/>
</dbReference>
<dbReference type="GO" id="GO:0006397">
    <property type="term" value="P:mRNA processing"/>
    <property type="evidence" value="ECO:0007669"/>
    <property type="project" value="UniProtKB-KW"/>
</dbReference>
<dbReference type="GO" id="GO:0008380">
    <property type="term" value="P:RNA splicing"/>
    <property type="evidence" value="ECO:0007669"/>
    <property type="project" value="UniProtKB-UniRule"/>
</dbReference>
<dbReference type="GO" id="GO:0008033">
    <property type="term" value="P:tRNA processing"/>
    <property type="evidence" value="ECO:0007669"/>
    <property type="project" value="UniProtKB-KW"/>
</dbReference>
<dbReference type="HAMAP" id="MF_01390">
    <property type="entry name" value="MatK"/>
    <property type="match status" value="1"/>
</dbReference>
<dbReference type="InterPro" id="IPR024937">
    <property type="entry name" value="Domain_X"/>
</dbReference>
<dbReference type="InterPro" id="IPR002866">
    <property type="entry name" value="Maturase_MatK"/>
</dbReference>
<dbReference type="InterPro" id="IPR024942">
    <property type="entry name" value="Maturase_MatK_N"/>
</dbReference>
<dbReference type="PANTHER" id="PTHR34811">
    <property type="entry name" value="MATURASE K"/>
    <property type="match status" value="1"/>
</dbReference>
<dbReference type="PANTHER" id="PTHR34811:SF1">
    <property type="entry name" value="MATURASE K"/>
    <property type="match status" value="1"/>
</dbReference>
<dbReference type="Pfam" id="PF01348">
    <property type="entry name" value="Intron_maturas2"/>
    <property type="match status" value="1"/>
</dbReference>
<dbReference type="Pfam" id="PF01824">
    <property type="entry name" value="MatK_N"/>
    <property type="match status" value="1"/>
</dbReference>
<sequence length="503" mass="59939">MEEFQGYFELDRXRQHDFLYPLLFREYIYALAHDHGLNRSILFKNAGYDKKSSSIVVKRLITRMYQQNPLIFSANDSIQNPFFGHNKNLYSQIISEGFAVIVEIPFSLRLVSSLERKEIAKSHNLRSIHSIFPFLEDKFSHLDYVSDVLIPYHIHLEILVQTLRYWVKDASSLHLLRFFLHEYWNSLITPKKHIILFSKGNPRLFLFLYNSHICEYESIFLFLRNQSSHLRSTSSGIFFERIYFYVKIEHFAKVFFDNDFQCILWFFKDPFMHYVRYQGKSILASKDTPLLMNKWKYYLVTLWQYHFYAWFQPGRIDINQLCKYSLDFLGYRSSVRLNSSVVRSQMLENSFLINNAMKKFETIVPIIPLIGSLSKANFCNTLGHPISKPTRADSSDSDIIDRFLRICRNLSHYHSGSSKKKSLYRVKYILRLSCVKTLARKHKRTVRTFFKRLGSEFLEXFLTEEEVVLSLIFPRTYSTSRRLYRGQIWYLDITSINDLVNYE</sequence>
<accession>Q8WJ18</accession>
<reference key="1">
    <citation type="journal article" date="2001" name="Am. J. Bot.">
        <title>Myrtaceae revisited: a reassessment of intrafamilial groups.</title>
        <authorList>
            <person name="Wilson P.G."/>
            <person name="O'Brien M.M."/>
            <person name="Gadek P.A."/>
            <person name="Quinn C.J."/>
        </authorList>
    </citation>
    <scope>NUCLEOTIDE SEQUENCE [GENOMIC DNA]</scope>
</reference>
<proteinExistence type="inferred from homology"/>